<keyword id="KW-0002">3D-structure</keyword>
<keyword id="KW-0025">Alternative splicing</keyword>
<keyword id="KW-0963">Cytoplasm</keyword>
<keyword id="KW-1017">Isopeptide bond</keyword>
<keyword id="KW-0440">LIM domain</keyword>
<keyword id="KW-0479">Metal-binding</keyword>
<keyword id="KW-0539">Nucleus</keyword>
<keyword id="KW-0597">Phosphoprotein</keyword>
<keyword id="KW-1267">Proteomics identification</keyword>
<keyword id="KW-1185">Reference proteome</keyword>
<keyword id="KW-0677">Repeat</keyword>
<keyword id="KW-0804">Transcription</keyword>
<keyword id="KW-0805">Transcription regulation</keyword>
<keyword id="KW-0832">Ubl conjugation</keyword>
<keyword id="KW-0862">Zinc</keyword>
<keyword id="KW-0863">Zinc-finger</keyword>
<protein>
    <recommendedName>
        <fullName>Four and a half LIM domains protein 2</fullName>
        <shortName>FHL-2</shortName>
    </recommendedName>
    <alternativeName>
        <fullName>LIM domain protein DRAL</fullName>
    </alternativeName>
    <alternativeName>
        <fullName>Skeletal muscle LIM-protein 3</fullName>
        <shortName>SLIM-3</shortName>
    </alternativeName>
</protein>
<feature type="chain" id="PRO_0000075737" description="Four and a half LIM domains protein 2">
    <location>
        <begin position="1"/>
        <end position="279"/>
    </location>
</feature>
<feature type="domain" description="LIM zinc-binding 1" evidence="4">
    <location>
        <begin position="40"/>
        <end position="92"/>
    </location>
</feature>
<feature type="domain" description="LIM zinc-binding 2" evidence="4">
    <location>
        <begin position="101"/>
        <end position="153"/>
    </location>
</feature>
<feature type="domain" description="LIM zinc-binding 3" evidence="4">
    <location>
        <begin position="162"/>
        <end position="212"/>
    </location>
</feature>
<feature type="domain" description="LIM zinc-binding 4" evidence="4">
    <location>
        <begin position="221"/>
        <end position="275"/>
    </location>
</feature>
<feature type="zinc finger region" description="C4-type" evidence="3">
    <location>
        <begin position="7"/>
        <end position="31"/>
    </location>
</feature>
<feature type="modified residue" description="Phosphoserine" evidence="15">
    <location>
        <position position="238"/>
    </location>
</feature>
<feature type="cross-link" description="Glycyl lysine isopeptide (Lys-Gly) (interchain with G-Cter in SUMO2)" evidence="16">
    <location>
        <position position="78"/>
    </location>
</feature>
<feature type="cross-link" description="Glycyl lysine isopeptide (Lys-Gly) (interchain with G-Cter in SUMO2)" evidence="16">
    <location>
        <position position="167"/>
    </location>
</feature>
<feature type="cross-link" description="Glycyl lysine isopeptide (Lys-Gly) (interchain with G-Cter in SUMO2)" evidence="16">
    <location>
        <position position="220"/>
    </location>
</feature>
<feature type="splice variant" id="VSP_056999" description="In isoform 2." evidence="14">
    <original>DLSYKDRHWHEACFHCSQCRNSLVDKPFAAKEDQLLCTDCYSNEYSSKCQECKKTIMPGTRKMEYKGSSWHETCFICHRCQQPIGTKSFIPKDNQNFCV</original>
    <variation>VPARWSTRAAAGMRPASSATAASSQLEPRVSSPKTIRISVCPAMRNNMPCSAFSAKSPSPREGSLTGSSPGTRSASCAPPAGSSCLGSASQLAMTLPTA</variation>
    <location>
        <begin position="53"/>
        <end position="151"/>
    </location>
</feature>
<feature type="splice variant" id="VSP_057000" description="In isoform 2." evidence="14">
    <location>
        <begin position="152"/>
        <end position="279"/>
    </location>
</feature>
<feature type="sequence variant" id="VAR_067455" evidence="11 12 13">
    <original>K</original>
    <variation>M</variation>
    <location>
        <position position="167"/>
    </location>
</feature>
<feature type="turn" evidence="20">
    <location>
        <begin position="8"/>
        <end position="10"/>
    </location>
</feature>
<feature type="strand" evidence="20">
    <location>
        <begin position="20"/>
        <end position="22"/>
    </location>
</feature>
<feature type="strand" evidence="20">
    <location>
        <begin position="25"/>
        <end position="27"/>
    </location>
</feature>
<feature type="helix" evidence="20">
    <location>
        <begin position="29"/>
        <end position="36"/>
    </location>
</feature>
<feature type="turn" evidence="20">
    <location>
        <begin position="41"/>
        <end position="43"/>
    </location>
</feature>
<feature type="strand" evidence="20">
    <location>
        <begin position="45"/>
        <end position="47"/>
    </location>
</feature>
<feature type="strand" evidence="20">
    <location>
        <begin position="53"/>
        <end position="56"/>
    </location>
</feature>
<feature type="strand" evidence="20">
    <location>
        <begin position="59"/>
        <end position="62"/>
    </location>
</feature>
<feature type="turn" evidence="20">
    <location>
        <begin position="63"/>
        <end position="65"/>
    </location>
</feature>
<feature type="turn" evidence="20">
    <location>
        <begin position="69"/>
        <end position="71"/>
    </location>
</feature>
<feature type="strand" evidence="20">
    <location>
        <begin position="76"/>
        <end position="78"/>
    </location>
</feature>
<feature type="helix" evidence="20">
    <location>
        <begin position="90"/>
        <end position="97"/>
    </location>
</feature>
<feature type="strand" evidence="17">
    <location>
        <begin position="101"/>
        <end position="104"/>
    </location>
</feature>
<feature type="strand" evidence="17">
    <location>
        <begin position="110"/>
        <end position="112"/>
    </location>
</feature>
<feature type="strand" evidence="17">
    <location>
        <begin position="114"/>
        <end position="117"/>
    </location>
</feature>
<feature type="strand" evidence="17">
    <location>
        <begin position="120"/>
        <end position="123"/>
    </location>
</feature>
<feature type="turn" evidence="17">
    <location>
        <begin position="124"/>
        <end position="127"/>
    </location>
</feature>
<feature type="strand" evidence="17">
    <location>
        <begin position="130"/>
        <end position="132"/>
    </location>
</feature>
<feature type="strand" evidence="17">
    <location>
        <begin position="138"/>
        <end position="144"/>
    </location>
</feature>
<feature type="strand" evidence="17">
    <location>
        <begin position="147"/>
        <end position="150"/>
    </location>
</feature>
<feature type="helix" evidence="17">
    <location>
        <begin position="151"/>
        <end position="157"/>
    </location>
</feature>
<feature type="strand" evidence="19">
    <location>
        <begin position="163"/>
        <end position="165"/>
    </location>
</feature>
<feature type="strand" evidence="19">
    <location>
        <begin position="171"/>
        <end position="182"/>
    </location>
</feature>
<feature type="turn" evidence="19">
    <location>
        <begin position="183"/>
        <end position="185"/>
    </location>
</feature>
<feature type="strand" evidence="19">
    <location>
        <begin position="189"/>
        <end position="191"/>
    </location>
</feature>
<feature type="strand" evidence="19">
    <location>
        <begin position="201"/>
        <end position="208"/>
    </location>
</feature>
<feature type="helix" evidence="19">
    <location>
        <begin position="210"/>
        <end position="216"/>
    </location>
</feature>
<feature type="turn" evidence="18">
    <location>
        <begin position="222"/>
        <end position="225"/>
    </location>
</feature>
<feature type="strand" evidence="18">
    <location>
        <begin position="231"/>
        <end position="233"/>
    </location>
</feature>
<feature type="turn" evidence="18">
    <location>
        <begin position="246"/>
        <end position="248"/>
    </location>
</feature>
<feature type="strand" evidence="18">
    <location>
        <begin position="252"/>
        <end position="254"/>
    </location>
</feature>
<feature type="strand" evidence="18">
    <location>
        <begin position="267"/>
        <end position="271"/>
    </location>
</feature>
<feature type="helix" evidence="18">
    <location>
        <begin position="273"/>
        <end position="277"/>
    </location>
</feature>
<evidence type="ECO:0000250" key="1">
    <source>
        <dbReference type="UniProtKB" id="O35115"/>
    </source>
</evidence>
<evidence type="ECO:0000250" key="2">
    <source>
        <dbReference type="UniProtKB" id="O70433"/>
    </source>
</evidence>
<evidence type="ECO:0000255" key="3"/>
<evidence type="ECO:0000255" key="4">
    <source>
        <dbReference type="PROSITE-ProRule" id="PRU00125"/>
    </source>
</evidence>
<evidence type="ECO:0000269" key="5">
    <source>
    </source>
</evidence>
<evidence type="ECO:0000269" key="6">
    <source>
    </source>
</evidence>
<evidence type="ECO:0000269" key="7">
    <source>
    </source>
</evidence>
<evidence type="ECO:0000269" key="8">
    <source>
    </source>
</evidence>
<evidence type="ECO:0000269" key="9">
    <source>
    </source>
</evidence>
<evidence type="ECO:0000269" key="10">
    <source>
    </source>
</evidence>
<evidence type="ECO:0000269" key="11">
    <source>
    </source>
</evidence>
<evidence type="ECO:0000269" key="12">
    <source>
    </source>
</evidence>
<evidence type="ECO:0000269" key="13">
    <source ref="5"/>
</evidence>
<evidence type="ECO:0000303" key="14">
    <source>
    </source>
</evidence>
<evidence type="ECO:0007744" key="15">
    <source>
    </source>
</evidence>
<evidence type="ECO:0007744" key="16">
    <source>
    </source>
</evidence>
<evidence type="ECO:0007829" key="17">
    <source>
        <dbReference type="PDB" id="1X4K"/>
    </source>
</evidence>
<evidence type="ECO:0007829" key="18">
    <source>
        <dbReference type="PDB" id="1X4L"/>
    </source>
</evidence>
<evidence type="ECO:0007829" key="19">
    <source>
        <dbReference type="PDB" id="2D8Z"/>
    </source>
</evidence>
<evidence type="ECO:0007829" key="20">
    <source>
        <dbReference type="PDB" id="2MIU"/>
    </source>
</evidence>
<gene>
    <name type="primary">FHL2</name>
    <name type="synonym">DRAL</name>
    <name type="synonym">SLIM3</name>
</gene>
<organism>
    <name type="scientific">Homo sapiens</name>
    <name type="common">Human</name>
    <dbReference type="NCBI Taxonomy" id="9606"/>
    <lineage>
        <taxon>Eukaryota</taxon>
        <taxon>Metazoa</taxon>
        <taxon>Chordata</taxon>
        <taxon>Craniata</taxon>
        <taxon>Vertebrata</taxon>
        <taxon>Euteleostomi</taxon>
        <taxon>Mammalia</taxon>
        <taxon>Eutheria</taxon>
        <taxon>Euarchontoglires</taxon>
        <taxon>Primates</taxon>
        <taxon>Haplorrhini</taxon>
        <taxon>Catarrhini</taxon>
        <taxon>Hominidae</taxon>
        <taxon>Homo</taxon>
    </lineage>
</organism>
<sequence>MTERFDCHHCNESLFGKKYILREESPYCVVCFETLFANTCEECGKPIGCDCKDLSYKDRHWHEACFHCSQCRNSLVDKPFAAKEDQLLCTDCYSNEYSSKCQECKKTIMPGTRKMEYKGSSWHETCFICHRCQQPIGTKSFIPKDNQNFCVPCYEKQHAMQCVQCKKPITTGGVTYREQPWHKECFVCTACRKQLSGQRFTARDDFAYCLNCFCDLYAKKCAGCTNPISGLGGTKYISFEERQWHNDCFNCKKCSLSLVGRGFLTERDDILCPDCGKDI</sequence>
<dbReference type="EMBL" id="L42176">
    <property type="protein sequence ID" value="AAA85333.1"/>
    <property type="molecule type" value="mRNA"/>
</dbReference>
<dbReference type="EMBL" id="U29332">
    <property type="protein sequence ID" value="AAC52073.1"/>
    <property type="molecule type" value="mRNA"/>
</dbReference>
<dbReference type="EMBL" id="AB038794">
    <property type="protein sequence ID" value="BAA92253.1"/>
    <property type="molecule type" value="Genomic_DNA"/>
</dbReference>
<dbReference type="EMBL" id="AB158503">
    <property type="protein sequence ID" value="BAD69710.1"/>
    <property type="molecule type" value="mRNA"/>
</dbReference>
<dbReference type="EMBL" id="DQ307067">
    <property type="protein sequence ID" value="ABC25549.1"/>
    <property type="molecule type" value="mRNA"/>
</dbReference>
<dbReference type="EMBL" id="AC012360">
    <property type="status" value="NOT_ANNOTATED_CDS"/>
    <property type="molecule type" value="Genomic_DNA"/>
</dbReference>
<dbReference type="EMBL" id="AC068273">
    <property type="status" value="NOT_ANNOTATED_CDS"/>
    <property type="molecule type" value="Genomic_DNA"/>
</dbReference>
<dbReference type="EMBL" id="AC108058">
    <property type="status" value="NOT_ANNOTATED_CDS"/>
    <property type="molecule type" value="Genomic_DNA"/>
</dbReference>
<dbReference type="EMBL" id="BC014397">
    <property type="protein sequence ID" value="AAH14397.1"/>
    <property type="molecule type" value="mRNA"/>
</dbReference>
<dbReference type="EMBL" id="U60117">
    <property type="protein sequence ID" value="AAC50794.1"/>
    <property type="molecule type" value="mRNA"/>
</dbReference>
<dbReference type="CCDS" id="CCDS2070.1">
    <molecule id="Q14192-1"/>
</dbReference>
<dbReference type="PIR" id="JC6565">
    <property type="entry name" value="JC6565"/>
</dbReference>
<dbReference type="RefSeq" id="NP_001034581.1">
    <molecule id="Q14192-1"/>
    <property type="nucleotide sequence ID" value="NM_001039492.3"/>
</dbReference>
<dbReference type="RefSeq" id="NP_001305823.1">
    <molecule id="Q14192-1"/>
    <property type="nucleotide sequence ID" value="NM_001318894.1"/>
</dbReference>
<dbReference type="RefSeq" id="NP_001305824.1">
    <molecule id="Q14192-1"/>
    <property type="nucleotide sequence ID" value="NM_001318895.3"/>
</dbReference>
<dbReference type="RefSeq" id="NP_001305825.1">
    <molecule id="Q14192-1"/>
    <property type="nucleotide sequence ID" value="NM_001318896.2"/>
</dbReference>
<dbReference type="RefSeq" id="NP_001305826.1">
    <property type="nucleotide sequence ID" value="NM_001318897.1"/>
</dbReference>
<dbReference type="RefSeq" id="NP_001361328.1">
    <molecule id="Q14192-1"/>
    <property type="nucleotide sequence ID" value="NM_001374399.1"/>
</dbReference>
<dbReference type="RefSeq" id="NP_001441.4">
    <molecule id="Q14192-1"/>
    <property type="nucleotide sequence ID" value="NM_001450.3"/>
</dbReference>
<dbReference type="RefSeq" id="NP_963849.1">
    <molecule id="Q14192-1"/>
    <property type="nucleotide sequence ID" value="NM_201555.3"/>
</dbReference>
<dbReference type="RefSeq" id="NP_963851.2">
    <molecule id="Q14192-1"/>
    <property type="nucleotide sequence ID" value="NM_201557.5"/>
</dbReference>
<dbReference type="RefSeq" id="XP_011509100.1">
    <property type="nucleotide sequence ID" value="XM_011510798.2"/>
</dbReference>
<dbReference type="PDB" id="1X4K">
    <property type="method" value="NMR"/>
    <property type="chains" value="A=101-159"/>
</dbReference>
<dbReference type="PDB" id="1X4L">
    <property type="method" value="NMR"/>
    <property type="chains" value="A=221-279"/>
</dbReference>
<dbReference type="PDB" id="2D8Z">
    <property type="method" value="NMR"/>
    <property type="chains" value="A=162-218"/>
</dbReference>
<dbReference type="PDB" id="2MIU">
    <property type="method" value="NMR"/>
    <property type="chains" value="A=1-98"/>
</dbReference>
<dbReference type="PDBsum" id="1X4K"/>
<dbReference type="PDBsum" id="1X4L"/>
<dbReference type="PDBsum" id="2D8Z"/>
<dbReference type="PDBsum" id="2MIU"/>
<dbReference type="SMR" id="Q14192"/>
<dbReference type="BioGRID" id="108565">
    <property type="interactions" value="406"/>
</dbReference>
<dbReference type="CORUM" id="Q14192"/>
<dbReference type="DIP" id="DIP-5980N"/>
<dbReference type="FunCoup" id="Q14192">
    <property type="interactions" value="795"/>
</dbReference>
<dbReference type="IntAct" id="Q14192">
    <property type="interactions" value="342"/>
</dbReference>
<dbReference type="MINT" id="Q14192"/>
<dbReference type="STRING" id="9606.ENSP00000386892"/>
<dbReference type="GlyGen" id="Q14192">
    <property type="glycosylation" value="1 site, 1 O-linked glycan (1 site)"/>
</dbReference>
<dbReference type="iPTMnet" id="Q14192"/>
<dbReference type="MetOSite" id="Q14192"/>
<dbReference type="PhosphoSitePlus" id="Q14192"/>
<dbReference type="SwissPalm" id="Q14192"/>
<dbReference type="BioMuta" id="FHL2"/>
<dbReference type="DMDM" id="116241364"/>
<dbReference type="jPOST" id="Q14192"/>
<dbReference type="MassIVE" id="Q14192"/>
<dbReference type="PaxDb" id="9606-ENSP00000386665"/>
<dbReference type="PeptideAtlas" id="Q14192"/>
<dbReference type="ProteomicsDB" id="59914">
    <molecule id="Q14192-1"/>
</dbReference>
<dbReference type="ProteomicsDB" id="65204"/>
<dbReference type="Pumba" id="Q14192"/>
<dbReference type="Antibodypedia" id="949">
    <property type="antibodies" value="359 antibodies from 37 providers"/>
</dbReference>
<dbReference type="DNASU" id="2274"/>
<dbReference type="Ensembl" id="ENST00000322142.13">
    <molecule id="Q14192-1"/>
    <property type="protein sequence ID" value="ENSP00000322909.8"/>
    <property type="gene ID" value="ENSG00000115641.19"/>
</dbReference>
<dbReference type="Ensembl" id="ENST00000344213.9">
    <molecule id="Q14192-1"/>
    <property type="protein sequence ID" value="ENSP00000344266.5"/>
    <property type="gene ID" value="ENSG00000115641.19"/>
</dbReference>
<dbReference type="Ensembl" id="ENST00000358129.8">
    <molecule id="Q14192-2"/>
    <property type="protein sequence ID" value="ENSP00000350846.5"/>
    <property type="gene ID" value="ENSG00000115641.19"/>
</dbReference>
<dbReference type="Ensembl" id="ENST00000393352.7">
    <molecule id="Q14192-1"/>
    <property type="protein sequence ID" value="ENSP00000377020.3"/>
    <property type="gene ID" value="ENSG00000115641.19"/>
</dbReference>
<dbReference type="Ensembl" id="ENST00000393353.7">
    <molecule id="Q14192-1"/>
    <property type="protein sequence ID" value="ENSP00000377021.3"/>
    <property type="gene ID" value="ENSG00000115641.19"/>
</dbReference>
<dbReference type="Ensembl" id="ENST00000408995.5">
    <molecule id="Q14192-1"/>
    <property type="protein sequence ID" value="ENSP00000386633.1"/>
    <property type="gene ID" value="ENSG00000115641.19"/>
</dbReference>
<dbReference type="Ensembl" id="ENST00000409177.6">
    <molecule id="Q14192-1"/>
    <property type="protein sequence ID" value="ENSP00000386892.3"/>
    <property type="gene ID" value="ENSG00000115641.19"/>
</dbReference>
<dbReference type="Ensembl" id="ENST00000409807.5">
    <molecule id="Q14192-1"/>
    <property type="protein sequence ID" value="ENSP00000386665.1"/>
    <property type="gene ID" value="ENSG00000115641.19"/>
</dbReference>
<dbReference type="Ensembl" id="ENST00000530340.6">
    <molecule id="Q14192-1"/>
    <property type="protein sequence ID" value="ENSP00000433567.2"/>
    <property type="gene ID" value="ENSG00000115641.19"/>
</dbReference>
<dbReference type="GeneID" id="2274"/>
<dbReference type="KEGG" id="hsa:2274"/>
<dbReference type="MANE-Select" id="ENST00000530340.6">
    <property type="protein sequence ID" value="ENSP00000433567.2"/>
    <property type="RefSeq nucleotide sequence ID" value="NM_001318895.3"/>
    <property type="RefSeq protein sequence ID" value="NP_001305824.1"/>
</dbReference>
<dbReference type="UCSC" id="uc061mpc.1">
    <molecule id="Q14192-1"/>
    <property type="organism name" value="human"/>
</dbReference>
<dbReference type="AGR" id="HGNC:3703"/>
<dbReference type="CTD" id="2274"/>
<dbReference type="DisGeNET" id="2274"/>
<dbReference type="GeneCards" id="FHL2"/>
<dbReference type="HGNC" id="HGNC:3703">
    <property type="gene designation" value="FHL2"/>
</dbReference>
<dbReference type="HPA" id="ENSG00000115641">
    <property type="expression patterns" value="Group enriched (heart muscle, ovary)"/>
</dbReference>
<dbReference type="MalaCards" id="FHL2"/>
<dbReference type="MIM" id="602633">
    <property type="type" value="gene"/>
</dbReference>
<dbReference type="neXtProt" id="NX_Q14192"/>
<dbReference type="OpenTargets" id="ENSG00000115641"/>
<dbReference type="Orphanet" id="154">
    <property type="disease" value="Familial isolated dilated cardiomyopathy"/>
</dbReference>
<dbReference type="PharmGKB" id="PA164"/>
<dbReference type="VEuPathDB" id="HostDB:ENSG00000115641"/>
<dbReference type="eggNOG" id="KOG1704">
    <property type="taxonomic scope" value="Eukaryota"/>
</dbReference>
<dbReference type="GeneTree" id="ENSGT00950000183028"/>
<dbReference type="HOGENOM" id="CLU_001357_2_0_1"/>
<dbReference type="InParanoid" id="Q14192"/>
<dbReference type="OMA" id="CYEQQYA"/>
<dbReference type="OrthoDB" id="274660at2759"/>
<dbReference type="PAN-GO" id="Q14192">
    <property type="GO annotations" value="6 GO annotations based on evolutionary models"/>
</dbReference>
<dbReference type="PhylomeDB" id="Q14192"/>
<dbReference type="TreeFam" id="TF321684"/>
<dbReference type="PathwayCommons" id="Q14192"/>
<dbReference type="Reactome" id="R-HSA-1989781">
    <property type="pathway name" value="PPARA activates gene expression"/>
</dbReference>
<dbReference type="SignaLink" id="Q14192"/>
<dbReference type="SIGNOR" id="Q14192"/>
<dbReference type="BioGRID-ORCS" id="2274">
    <property type="hits" value="16 hits in 1168 CRISPR screens"/>
</dbReference>
<dbReference type="CD-CODE" id="DEE660B4">
    <property type="entry name" value="Stress granule"/>
</dbReference>
<dbReference type="ChiTaRS" id="FHL2">
    <property type="organism name" value="human"/>
</dbReference>
<dbReference type="EvolutionaryTrace" id="Q14192"/>
<dbReference type="GeneWiki" id="FHL2"/>
<dbReference type="GenomeRNAi" id="2274"/>
<dbReference type="Pharos" id="Q14192">
    <property type="development level" value="Tbio"/>
</dbReference>
<dbReference type="PRO" id="PR:Q14192"/>
<dbReference type="Proteomes" id="UP000005640">
    <property type="component" value="Chromosome 2"/>
</dbReference>
<dbReference type="RNAct" id="Q14192">
    <property type="molecule type" value="protein"/>
</dbReference>
<dbReference type="Bgee" id="ENSG00000115641">
    <property type="expression patterns" value="Expressed in left ventricle myocardium and 194 other cell types or tissues"/>
</dbReference>
<dbReference type="ExpressionAtlas" id="Q14192">
    <property type="expression patterns" value="baseline and differential"/>
</dbReference>
<dbReference type="GO" id="GO:0005925">
    <property type="term" value="C:focal adhesion"/>
    <property type="evidence" value="ECO:0007005"/>
    <property type="project" value="UniProtKB"/>
</dbReference>
<dbReference type="GO" id="GO:0005654">
    <property type="term" value="C:nucleoplasm"/>
    <property type="evidence" value="ECO:0000304"/>
    <property type="project" value="Reactome"/>
</dbReference>
<dbReference type="GO" id="GO:0005634">
    <property type="term" value="C:nucleus"/>
    <property type="evidence" value="ECO:0000318"/>
    <property type="project" value="GO_Central"/>
</dbReference>
<dbReference type="GO" id="GO:0030018">
    <property type="term" value="C:Z disc"/>
    <property type="evidence" value="ECO:0000318"/>
    <property type="project" value="GO_Central"/>
</dbReference>
<dbReference type="GO" id="GO:0043425">
    <property type="term" value="F:bHLH transcription factor binding"/>
    <property type="evidence" value="ECO:0000250"/>
    <property type="project" value="BHF-UCL"/>
</dbReference>
<dbReference type="GO" id="GO:0042802">
    <property type="term" value="F:identical protein binding"/>
    <property type="evidence" value="ECO:0000353"/>
    <property type="project" value="IntAct"/>
</dbReference>
<dbReference type="GO" id="GO:0003714">
    <property type="term" value="F:transcription corepressor activity"/>
    <property type="evidence" value="ECO:0000250"/>
    <property type="project" value="BHF-UCL"/>
</dbReference>
<dbReference type="GO" id="GO:0008134">
    <property type="term" value="F:transcription factor binding"/>
    <property type="evidence" value="ECO:0000353"/>
    <property type="project" value="UniProtKB"/>
</dbReference>
<dbReference type="GO" id="GO:0008270">
    <property type="term" value="F:zinc ion binding"/>
    <property type="evidence" value="ECO:0007669"/>
    <property type="project" value="UniProtKB-KW"/>
</dbReference>
<dbReference type="GO" id="GO:0055014">
    <property type="term" value="P:atrial cardiac muscle cell development"/>
    <property type="evidence" value="ECO:0007669"/>
    <property type="project" value="Ensembl"/>
</dbReference>
<dbReference type="GO" id="GO:0060347">
    <property type="term" value="P:heart trabecula formation"/>
    <property type="evidence" value="ECO:0007669"/>
    <property type="project" value="Ensembl"/>
</dbReference>
<dbReference type="GO" id="GO:0043066">
    <property type="term" value="P:negative regulation of apoptotic process"/>
    <property type="evidence" value="ECO:0000314"/>
    <property type="project" value="UniProtKB"/>
</dbReference>
<dbReference type="GO" id="GO:0070885">
    <property type="term" value="P:negative regulation of calcineurin-NFAT signaling cascade"/>
    <property type="evidence" value="ECO:0000315"/>
    <property type="project" value="UniProtKB"/>
</dbReference>
<dbReference type="GO" id="GO:0000122">
    <property type="term" value="P:negative regulation of transcription by RNA polymerase II"/>
    <property type="evidence" value="ECO:0000314"/>
    <property type="project" value="UniProtKB"/>
</dbReference>
<dbReference type="GO" id="GO:0001649">
    <property type="term" value="P:osteoblast differentiation"/>
    <property type="evidence" value="ECO:0007669"/>
    <property type="project" value="Ensembl"/>
</dbReference>
<dbReference type="GO" id="GO:0009725">
    <property type="term" value="P:response to hormone"/>
    <property type="evidence" value="ECO:0000315"/>
    <property type="project" value="BHF-UCL"/>
</dbReference>
<dbReference type="GO" id="GO:0055015">
    <property type="term" value="P:ventricular cardiac muscle cell development"/>
    <property type="evidence" value="ECO:0007669"/>
    <property type="project" value="Ensembl"/>
</dbReference>
<dbReference type="CDD" id="cd09422">
    <property type="entry name" value="LIM1_FHL2"/>
    <property type="match status" value="1"/>
</dbReference>
<dbReference type="CDD" id="cd09426">
    <property type="entry name" value="LIM2_FHL2"/>
    <property type="match status" value="1"/>
</dbReference>
<dbReference type="CDD" id="cd09431">
    <property type="entry name" value="LIM3_Fhl2"/>
    <property type="match status" value="1"/>
</dbReference>
<dbReference type="CDD" id="cd09433">
    <property type="entry name" value="LIM4_FHL2"/>
    <property type="match status" value="1"/>
</dbReference>
<dbReference type="FunFam" id="2.10.110.10:FF:000013">
    <property type="entry name" value="Four and a half LIM domains 1"/>
    <property type="match status" value="1"/>
</dbReference>
<dbReference type="FunFam" id="2.10.110.10:FF:000030">
    <property type="entry name" value="Four and a half LIM domains protein 2"/>
    <property type="match status" value="1"/>
</dbReference>
<dbReference type="FunFam" id="2.10.110.10:FF:000048">
    <property type="entry name" value="Four and a half LIM domains protein 2"/>
    <property type="match status" value="1"/>
</dbReference>
<dbReference type="FunFam" id="2.10.110.10:FF:000049">
    <property type="entry name" value="Four and a half LIM domains protein 2"/>
    <property type="match status" value="1"/>
</dbReference>
<dbReference type="Gene3D" id="2.10.110.10">
    <property type="entry name" value="Cysteine Rich Protein"/>
    <property type="match status" value="4"/>
</dbReference>
<dbReference type="IDEAL" id="IID00473"/>
<dbReference type="InterPro" id="IPR056807">
    <property type="entry name" value="LIM_FHL1/2/3/5_N"/>
</dbReference>
<dbReference type="InterPro" id="IPR001781">
    <property type="entry name" value="Znf_LIM"/>
</dbReference>
<dbReference type="PANTHER" id="PTHR24205">
    <property type="entry name" value="FOUR AND A HALF LIM DOMAINS PROTEIN"/>
    <property type="match status" value="1"/>
</dbReference>
<dbReference type="PANTHER" id="PTHR24205:SF3">
    <property type="entry name" value="FOUR AND A HALF LIM DOMAINS PROTEIN 2"/>
    <property type="match status" value="1"/>
</dbReference>
<dbReference type="Pfam" id="PF00412">
    <property type="entry name" value="LIM"/>
    <property type="match status" value="4"/>
</dbReference>
<dbReference type="Pfam" id="PF25076">
    <property type="entry name" value="LIM_FHL2-3_N"/>
    <property type="match status" value="1"/>
</dbReference>
<dbReference type="SMART" id="SM00132">
    <property type="entry name" value="LIM"/>
    <property type="match status" value="4"/>
</dbReference>
<dbReference type="SUPFAM" id="SSF57716">
    <property type="entry name" value="Glucocorticoid receptor-like (DNA-binding domain)"/>
    <property type="match status" value="5"/>
</dbReference>
<dbReference type="PROSITE" id="PS00478">
    <property type="entry name" value="LIM_DOMAIN_1"/>
    <property type="match status" value="4"/>
</dbReference>
<dbReference type="PROSITE" id="PS50023">
    <property type="entry name" value="LIM_DOMAIN_2"/>
    <property type="match status" value="4"/>
</dbReference>
<comment type="function">
    <text evidence="7 8 9 10">May function as a molecular transmitter linking various signaling pathways to transcriptional regulation. Negatively regulates the transcriptional repressor E4F1 and may function in cell growth. Inhibits the transcriptional activity of FOXO1 and its apoptotic function by enhancing the interaction of FOXO1 with SIRT1 and FOXO1 deacetylation. Negatively regulates the calcineurin/NFAT signaling pathway in cardiomyocytes (PubMed:28717008).</text>
</comment>
<comment type="subunit">
    <text evidence="2 5 6 7 8 9 10">Interacts with ZNF638 and TTN/titin (PubMed:11813260, PubMed:12432079). Interacts with E4F1 (PubMed:16652157). Interacts with GRB7 (PubMed:18853468). Interacts with SIRT1 and FOXO1 (PubMed:15692560). Interacts with CEFIP (PubMed:28717008). Interacts with calcineurin (By similarity). Interacts with FOXK1 (By similarity).</text>
</comment>
<comment type="interaction">
    <interactant intactId="EBI-701903">
        <id>Q14192</id>
    </interactant>
    <interactant intactId="EBI-2809489">
        <id>Q9NQ94</id>
        <label>A1CF</label>
    </interactant>
    <organismsDiffer>false</organismsDiffer>
    <experiments>3</experiments>
</comment>
<comment type="interaction">
    <interactant intactId="EBI-701903">
        <id>Q14192</id>
    </interactant>
    <interactant intactId="EBI-11743294">
        <id>Q8IZP0-5</id>
        <label>ABI1</label>
    </interactant>
    <organismsDiffer>false</organismsDiffer>
    <experiments>3</experiments>
</comment>
<comment type="interaction">
    <interactant intactId="EBI-701903">
        <id>Q14192</id>
    </interactant>
    <interactant intactId="EBI-11030084">
        <id>O14639-4</id>
        <label>ABLIM1</label>
    </interactant>
    <organismsDiffer>false</organismsDiffer>
    <experiments>3</experiments>
</comment>
<comment type="interaction">
    <interactant intactId="EBI-701903">
        <id>Q14192</id>
    </interactant>
    <interactant intactId="EBI-517035">
        <id>Q9NQ31</id>
        <label>AKIP1</label>
    </interactant>
    <organismsDiffer>false</organismsDiffer>
    <experiments>3</experiments>
</comment>
<comment type="interaction">
    <interactant intactId="EBI-701903">
        <id>Q14192</id>
    </interactant>
    <interactant intactId="EBI-17286414">
        <id>A2BDD9</id>
        <label>AMOT</label>
    </interactant>
    <organismsDiffer>false</organismsDiffer>
    <experiments>3</experiments>
</comment>
<comment type="interaction">
    <interactant intactId="EBI-701903">
        <id>Q14192</id>
    </interactant>
    <interactant intactId="EBI-14493093">
        <id>Q3KP44</id>
        <label>ANKRD55</label>
    </interactant>
    <organismsDiffer>false</organismsDiffer>
    <experiments>3</experiments>
</comment>
<comment type="interaction">
    <interactant intactId="EBI-701903">
        <id>Q14192</id>
    </interactant>
    <interactant intactId="EBI-750254">
        <id>Q9BRR9</id>
        <label>ARHGAP9</label>
    </interactant>
    <organismsDiffer>false</organismsDiffer>
    <experiments>3</experiments>
</comment>
<comment type="interaction">
    <interactant intactId="EBI-701903">
        <id>Q14192</id>
    </interactant>
    <interactant intactId="EBI-712767">
        <id>P18847</id>
        <label>ATF3</label>
    </interactant>
    <organismsDiffer>false</organismsDiffer>
    <experiments>3</experiments>
</comment>
<comment type="interaction">
    <interactant intactId="EBI-701903">
        <id>Q14192</id>
    </interactant>
    <interactant intactId="EBI-745689">
        <id>Q7L5A3</id>
        <label>ATOSB</label>
    </interactant>
    <organismsDiffer>false</organismsDiffer>
    <experiments>3</experiments>
</comment>
<comment type="interaction">
    <interactant intactId="EBI-701903">
        <id>Q14192</id>
    </interactant>
    <interactant intactId="EBI-16429704">
        <id>A0A0S2Z5G4</id>
        <label>BANP</label>
    </interactant>
    <organismsDiffer>false</organismsDiffer>
    <experiments>3</experiments>
</comment>
<comment type="interaction">
    <interactant intactId="EBI-701903">
        <id>Q14192</id>
    </interactant>
    <interactant intactId="EBI-16429313">
        <id>B4DE54</id>
        <label>BANP</label>
    </interactant>
    <organismsDiffer>false</organismsDiffer>
    <experiments>4</experiments>
</comment>
<comment type="interaction">
    <interactant intactId="EBI-701903">
        <id>Q14192</id>
    </interactant>
    <interactant intactId="EBI-744695">
        <id>Q8N9N5</id>
        <label>BANP</label>
    </interactant>
    <organismsDiffer>false</organismsDiffer>
    <experiments>7</experiments>
</comment>
<comment type="interaction">
    <interactant intactId="EBI-701903">
        <id>Q14192</id>
    </interactant>
    <interactant intactId="EBI-11524452">
        <id>Q8N9N5-2</id>
        <label>BANP</label>
    </interactant>
    <organismsDiffer>false</organismsDiffer>
    <experiments>6</experiments>
</comment>
<comment type="interaction">
    <interactant intactId="EBI-701903">
        <id>Q14192</id>
    </interactant>
    <interactant intactId="EBI-16429296">
        <id>Q8N9N5-7</id>
        <label>BANP</label>
    </interactant>
    <organismsDiffer>false</organismsDiffer>
    <experiments>3</experiments>
</comment>
<comment type="interaction">
    <interactant intactId="EBI-701903">
        <id>Q14192</id>
    </interactant>
    <interactant intactId="EBI-12053927">
        <id>Q9UMQ3</id>
        <label>BARX2</label>
    </interactant>
    <organismsDiffer>false</organismsDiffer>
    <experiments>3</experiments>
</comment>
<comment type="interaction">
    <interactant intactId="EBI-701903">
        <id>Q14192</id>
    </interactant>
    <interactant intactId="EBI-2548012">
        <id>Q9H2G9</id>
        <label>BLZF1</label>
    </interactant>
    <organismsDiffer>false</organismsDiffer>
    <experiments>10</experiments>
</comment>
<comment type="interaction">
    <interactant intactId="EBI-701903">
        <id>Q14192</id>
    </interactant>
    <interactant intactId="EBI-349905">
        <id>P38398</id>
        <label>BRCA1</label>
    </interactant>
    <organismsDiffer>false</organismsDiffer>
    <experiments>6</experiments>
</comment>
<comment type="interaction">
    <interactant intactId="EBI-701903">
        <id>Q14192</id>
    </interactant>
    <interactant intactId="EBI-739879">
        <id>Q53TS8</id>
        <label>C2CD6</label>
    </interactant>
    <organismsDiffer>false</organismsDiffer>
    <experiments>3</experiments>
</comment>
<comment type="interaction">
    <interactant intactId="EBI-701903">
        <id>Q14192</id>
    </interactant>
    <interactant intactId="EBI-5656182">
        <id>O75155</id>
        <label>CAND2</label>
    </interactant>
    <organismsDiffer>false</organismsDiffer>
    <experiments>3</experiments>
</comment>
<comment type="interaction">
    <interactant intactId="EBI-701903">
        <id>Q14192</id>
    </interactant>
    <interactant intactId="EBI-11748295">
        <id>E9PSE9</id>
        <label>CCDC198</label>
    </interactant>
    <organismsDiffer>false</organismsDiffer>
    <experiments>3</experiments>
</comment>
<comment type="interaction">
    <interactant intactId="EBI-701903">
        <id>Q14192</id>
    </interactant>
    <interactant intactId="EBI-719994">
        <id>Q53HC0</id>
        <label>CCDC92</label>
    </interactant>
    <organismsDiffer>false</organismsDiffer>
    <experiments>10</experiments>
</comment>
<comment type="interaction">
    <interactant intactId="EBI-701903">
        <id>Q14192</id>
    </interactant>
    <interactant intactId="EBI-349854">
        <id>P13569</id>
        <label>CFTR</label>
    </interactant>
    <organismsDiffer>false</organismsDiffer>
    <experiments>10</experiments>
</comment>
<comment type="interaction">
    <interactant intactId="EBI-701903">
        <id>Q14192</id>
    </interactant>
    <interactant intactId="EBI-12155483">
        <id>Q9H1P6</id>
        <label>CIMIP1</label>
    </interactant>
    <organismsDiffer>false</organismsDiffer>
    <experiments>3</experiments>
</comment>
<comment type="interaction">
    <interactant intactId="EBI-701903">
        <id>Q14192</id>
    </interactant>
    <interactant intactId="EBI-1642112">
        <id>P05814</id>
        <label>CSN2</label>
    </interactant>
    <organismsDiffer>false</organismsDiffer>
    <experiments>4</experiments>
</comment>
<comment type="interaction">
    <interactant intactId="EBI-701903">
        <id>Q14192</id>
    </interactant>
    <interactant intactId="EBI-10330381">
        <id>W5RWE1</id>
        <label>CSN2</label>
    </interactant>
    <organismsDiffer>false</organismsDiffer>
    <experiments>3</experiments>
</comment>
<comment type="interaction">
    <interactant intactId="EBI-701903">
        <id>Q14192</id>
    </interactant>
    <interactant intactId="EBI-12840152">
        <id>A0PJW8</id>
        <label>DAPL1</label>
    </interactant>
    <organismsDiffer>false</organismsDiffer>
    <experiments>3</experiments>
</comment>
<comment type="interaction">
    <interactant intactId="EBI-701903">
        <id>Q14192</id>
    </interactant>
    <interactant intactId="EBI-374238">
        <id>Q9NPI6</id>
        <label>DCP1A</label>
    </interactant>
    <organismsDiffer>false</organismsDiffer>
    <experiments>10</experiments>
</comment>
<comment type="interaction">
    <interactant intactId="EBI-701903">
        <id>Q14192</id>
    </interactant>
    <interactant intactId="EBI-742054">
        <id>Q96D03</id>
        <label>DDIT4L</label>
    </interactant>
    <organismsDiffer>false</organismsDiffer>
    <experiments>3</experiments>
</comment>
<comment type="interaction">
    <interactant intactId="EBI-701903">
        <id>Q14192</id>
    </interactant>
    <interactant intactId="EBI-718185">
        <id>O75398</id>
        <label>DEAF1</label>
    </interactant>
    <organismsDiffer>false</organismsDiffer>
    <experiments>4</experiments>
</comment>
<comment type="interaction">
    <interactant intactId="EBI-701903">
        <id>Q14192</id>
    </interactant>
    <interactant intactId="EBI-11961832">
        <id>Q6IS01</id>
        <label>DLGAP1</label>
    </interactant>
    <organismsDiffer>false</organismsDiffer>
    <experiments>3</experiments>
</comment>
<comment type="interaction">
    <interactant intactId="EBI-701903">
        <id>Q14192</id>
    </interactant>
    <interactant intactId="EBI-740376">
        <id>Q86UW9</id>
        <label>DTX2</label>
    </interactant>
    <organismsDiffer>false</organismsDiffer>
    <experiments>6</experiments>
</comment>
<comment type="interaction">
    <interactant intactId="EBI-701903">
        <id>Q14192</id>
    </interactant>
    <interactant intactId="EBI-8465160">
        <id>Q9H8W3</id>
        <label>FAM204A</label>
    </interactant>
    <organismsDiffer>false</organismsDiffer>
    <experiments>3</experiments>
</comment>
<comment type="interaction">
    <interactant intactId="EBI-701903">
        <id>Q14192</id>
    </interactant>
    <interactant intactId="EBI-701903">
        <id>Q14192</id>
        <label>FHL2</label>
    </interactant>
    <organismsDiffer>false</organismsDiffer>
    <experiments>3</experiments>
</comment>
<comment type="interaction">
    <interactant intactId="EBI-701903">
        <id>Q14192</id>
    </interactant>
    <interactant intactId="EBI-1108782">
        <id>Q12778</id>
        <label>FOXO1</label>
    </interactant>
    <organismsDiffer>false</organismsDiffer>
    <experiments>8</experiments>
</comment>
<comment type="interaction">
    <interactant intactId="EBI-701903">
        <id>Q14192</id>
    </interactant>
    <interactant intactId="EBI-638925">
        <id>Q06546</id>
        <label>GABPA</label>
    </interactant>
    <organismsDiffer>false</organismsDiffer>
    <experiments>2</experiments>
</comment>
<comment type="interaction">
    <interactant intactId="EBI-701903">
        <id>Q14192</id>
    </interactant>
    <interactant intactId="EBI-1052570">
        <id>O95995</id>
        <label>GAS8</label>
    </interactant>
    <organismsDiffer>false</organismsDiffer>
    <experiments>3</experiments>
</comment>
<comment type="interaction">
    <interactant intactId="EBI-701903">
        <id>Q14192</id>
    </interactant>
    <interactant intactId="EBI-923440">
        <id>Q8WXI9</id>
        <label>GATAD2B</label>
    </interactant>
    <organismsDiffer>false</organismsDiffer>
    <experiments>3</experiments>
</comment>
<comment type="interaction">
    <interactant intactId="EBI-701903">
        <id>Q14192</id>
    </interactant>
    <interactant intactId="EBI-2804292">
        <id>Q49A26</id>
        <label>GLYR1</label>
    </interactant>
    <organismsDiffer>false</organismsDiffer>
    <experiments>4</experiments>
</comment>
<comment type="interaction">
    <interactant intactId="EBI-701903">
        <id>Q14192</id>
    </interactant>
    <interactant intactId="EBI-12143817">
        <id>Q49A26-4</id>
        <label>GLYR1</label>
    </interactant>
    <organismsDiffer>false</organismsDiffer>
    <experiments>3</experiments>
</comment>
<comment type="interaction">
    <interactant intactId="EBI-701903">
        <id>Q14192</id>
    </interactant>
    <interactant intactId="EBI-948296">
        <id>Q9UKD1</id>
        <label>GMEB2</label>
    </interactant>
    <organismsDiffer>false</organismsDiffer>
    <experiments>3</experiments>
</comment>
<comment type="interaction">
    <interactant intactId="EBI-701903">
        <id>Q14192</id>
    </interactant>
    <interactant intactId="EBI-358636">
        <id>Q9UBI6</id>
        <label>GNG12</label>
    </interactant>
    <organismsDiffer>false</organismsDiffer>
    <experiments>11</experiments>
</comment>
<comment type="interaction">
    <interactant intactId="EBI-701903">
        <id>Q14192</id>
    </interactant>
    <interactant intactId="EBI-6395970">
        <id>P50150</id>
        <label>GNG4</label>
    </interactant>
    <organismsDiffer>false</organismsDiffer>
    <experiments>3</experiments>
</comment>
<comment type="interaction">
    <interactant intactId="EBI-701903">
        <id>Q14192</id>
    </interactant>
    <interactant intactId="EBI-11163335">
        <id>Q9NYA3</id>
        <label>GOLGA6A</label>
    </interactant>
    <organismsDiffer>false</organismsDiffer>
    <experiments>3</experiments>
</comment>
<comment type="interaction">
    <interactant intactId="EBI-701903">
        <id>Q14192</id>
    </interactant>
    <interactant intactId="EBI-1030560">
        <id>P13984</id>
        <label>GTF2F2</label>
    </interactant>
    <organismsDiffer>false</organismsDiffer>
    <experiments>3</experiments>
</comment>
<comment type="interaction">
    <interactant intactId="EBI-701903">
        <id>Q14192</id>
    </interactant>
    <interactant intactId="EBI-715539">
        <id>P32780</id>
        <label>GTF2H1</label>
    </interactant>
    <organismsDiffer>false</organismsDiffer>
    <experiments>3</experiments>
</comment>
<comment type="interaction">
    <interactant intactId="EBI-701903">
        <id>Q14192</id>
    </interactant>
    <interactant intactId="EBI-396188">
        <id>P51610-1</id>
        <label>HCFC1</label>
    </interactant>
    <organismsDiffer>false</organismsDiffer>
    <experiments>5</experiments>
</comment>
<comment type="interaction">
    <interactant intactId="EBI-701903">
        <id>Q14192</id>
    </interactant>
    <interactant intactId="EBI-7116203">
        <id>O75031</id>
        <label>HSF2BP</label>
    </interactant>
    <organismsDiffer>false</organismsDiffer>
    <experiments>3</experiments>
</comment>
<comment type="interaction">
    <interactant intactId="EBI-701903">
        <id>Q14192</id>
    </interactant>
    <interactant intactId="EBI-1387094">
        <id>Q02535</id>
        <label>ID3</label>
    </interactant>
    <organismsDiffer>false</organismsDiffer>
    <experiments>4</experiments>
</comment>
<comment type="interaction">
    <interactant intactId="EBI-701903">
        <id>Q14192</id>
    </interactant>
    <interactant intactId="EBI-12823003">
        <id>P80217-2</id>
        <label>IFI35</label>
    </interactant>
    <organismsDiffer>false</organismsDiffer>
    <experiments>5</experiments>
</comment>
<comment type="interaction">
    <interactant intactId="EBI-701903">
        <id>Q14192</id>
    </interactant>
    <interactant intactId="EBI-11522367">
        <id>Q13422-7</id>
        <label>IKZF1</label>
    </interactant>
    <organismsDiffer>false</organismsDiffer>
    <experiments>3</experiments>
</comment>
<comment type="interaction">
    <interactant intactId="EBI-701903">
        <id>Q14192</id>
    </interactant>
    <interactant intactId="EBI-17178971">
        <id>Q14005-2</id>
        <label>IL16</label>
    </interactant>
    <organismsDiffer>false</organismsDiffer>
    <experiments>3</experiments>
</comment>
<comment type="interaction">
    <interactant intactId="EBI-701903">
        <id>Q14192</id>
    </interactant>
    <interactant intactId="EBI-6509505">
        <id>Q0VD86</id>
        <label>INCA1</label>
    </interactant>
    <organismsDiffer>false</organismsDiffer>
    <experiments>5</experiments>
</comment>
<comment type="interaction">
    <interactant intactId="EBI-701903">
        <id>Q14192</id>
    </interactant>
    <interactant intactId="EBI-702484">
        <id>P14923</id>
        <label>JUP</label>
    </interactant>
    <organismsDiffer>false</organismsDiffer>
    <experiments>7</experiments>
</comment>
<comment type="interaction">
    <interactant intactId="EBI-701903">
        <id>Q14192</id>
    </interactant>
    <interactant intactId="EBI-2556193">
        <id>Q63ZY3</id>
        <label>KANK2</label>
    </interactant>
    <organismsDiffer>false</organismsDiffer>
    <experiments>6</experiments>
</comment>
<comment type="interaction">
    <interactant intactId="EBI-701903">
        <id>Q14192</id>
    </interactant>
    <interactant intactId="EBI-10188326">
        <id>Q5T5P2-6</id>
        <label>KIAA1217</label>
    </interactant>
    <organismsDiffer>false</organismsDiffer>
    <experiments>3</experiments>
</comment>
<comment type="interaction">
    <interactant intactId="EBI-701903">
        <id>Q14192</id>
    </interactant>
    <interactant intactId="EBI-355878">
        <id>P33176</id>
        <label>KIF5B</label>
    </interactant>
    <organismsDiffer>false</organismsDiffer>
    <experiments>3</experiments>
</comment>
<comment type="interaction">
    <interactant intactId="EBI-701903">
        <id>Q14192</id>
    </interactant>
    <interactant intactId="EBI-750750">
        <id>Q9Y4X4</id>
        <label>KLF12</label>
    </interactant>
    <organismsDiffer>false</organismsDiffer>
    <experiments>5</experiments>
</comment>
<comment type="interaction">
    <interactant intactId="EBI-701903">
        <id>Q14192</id>
    </interactant>
    <interactant intactId="EBI-10981970">
        <id>Q5T749</id>
        <label>KPRP</label>
    </interactant>
    <organismsDiffer>false</organismsDiffer>
    <experiments>3</experiments>
</comment>
<comment type="interaction">
    <interactant intactId="EBI-701903">
        <id>Q14192</id>
    </interactant>
    <interactant intactId="EBI-747813">
        <id>Q5SW96</id>
        <label>LDLRAP1</label>
    </interactant>
    <organismsDiffer>false</organismsDiffer>
    <experiments>3</experiments>
</comment>
<comment type="interaction">
    <interactant intactId="EBI-701903">
        <id>Q14192</id>
    </interactant>
    <interactant intactId="EBI-473196">
        <id>Q5T3J3</id>
        <label>LRIF1</label>
    </interactant>
    <organismsDiffer>false</organismsDiffer>
    <experiments>3</experiments>
</comment>
<comment type="interaction">
    <interactant intactId="EBI-701903">
        <id>Q14192</id>
    </interactant>
    <interactant intactId="EBI-5668174">
        <id>Q9UJ55</id>
        <label>MAGEL2</label>
    </interactant>
    <organismsDiffer>false</organismsDiffer>
    <experiments>3</experiments>
</comment>
<comment type="interaction">
    <interactant intactId="EBI-701903">
        <id>Q14192</id>
    </interactant>
    <interactant intactId="EBI-12516603">
        <id>Q8WWY6</id>
        <label>MBD3L1</label>
    </interactant>
    <organismsDiffer>false</organismsDiffer>
    <experiments>3</experiments>
</comment>
<comment type="interaction">
    <interactant intactId="EBI-701903">
        <id>Q14192</id>
    </interactant>
    <interactant intactId="EBI-2555085">
        <id>Q8IVT2</id>
        <label>MISP</label>
    </interactant>
    <organismsDiffer>false</organismsDiffer>
    <experiments>3</experiments>
</comment>
<comment type="interaction">
    <interactant intactId="EBI-701903">
        <id>Q14192</id>
    </interactant>
    <interactant intactId="EBI-7950783">
        <id>Q96JP2</id>
        <label>MYO15B</label>
    </interactant>
    <organismsDiffer>false</organismsDiffer>
    <experiments>5</experiments>
</comment>
<comment type="interaction">
    <interactant intactId="EBI-701903">
        <id>Q14192</id>
    </interactant>
    <interactant intactId="EBI-6916466">
        <id>Q9BZQ8</id>
        <label>NIBAN1</label>
    </interactant>
    <organismsDiffer>false</organismsDiffer>
    <experiments>6</experiments>
</comment>
<comment type="interaction">
    <interactant intactId="EBI-701903">
        <id>Q14192</id>
    </interactant>
    <interactant intactId="EBI-2547810">
        <id>Q16656</id>
        <label>NRF1</label>
    </interactant>
    <organismsDiffer>false</organismsDiffer>
    <experiments>5</experiments>
</comment>
<comment type="interaction">
    <interactant intactId="EBI-701903">
        <id>Q14192</id>
    </interactant>
    <interactant intactId="EBI-11742836">
        <id>Q16656-4</id>
        <label>NRF1</label>
    </interactant>
    <organismsDiffer>false</organismsDiffer>
    <experiments>3</experiments>
</comment>
<comment type="interaction">
    <interactant intactId="EBI-701903">
        <id>Q14192</id>
    </interactant>
    <interactant intactId="EBI-5774125">
        <id>A1E959</id>
        <label>ODAM</label>
    </interactant>
    <organismsDiffer>false</organismsDiffer>
    <experiments>2</experiments>
</comment>
<comment type="interaction">
    <interactant intactId="EBI-701903">
        <id>Q14192</id>
    </interactant>
    <interactant intactId="EBI-530034">
        <id>O43189</id>
        <label>PHF1</label>
    </interactant>
    <organismsDiffer>false</organismsDiffer>
    <experiments>3</experiments>
</comment>
<comment type="interaction">
    <interactant intactId="EBI-701903">
        <id>Q14192</id>
    </interactant>
    <interactant intactId="EBI-745085">
        <id>Q96BD5</id>
        <label>PHF21A</label>
    </interactant>
    <organismsDiffer>false</organismsDiffer>
    <experiments>5</experiments>
</comment>
<comment type="interaction">
    <interactant intactId="EBI-701903">
        <id>Q14192</id>
    </interactant>
    <interactant intactId="EBI-2803688">
        <id>Q13492</id>
        <label>PICALM</label>
    </interactant>
    <organismsDiffer>false</organismsDiffer>
    <experiments>8</experiments>
</comment>
<comment type="interaction">
    <interactant intactId="EBI-701903">
        <id>Q14192</id>
    </interactant>
    <interactant intactId="EBI-1373569">
        <id>P55347</id>
        <label>PKNOX1</label>
    </interactant>
    <organismsDiffer>false</organismsDiffer>
    <experiments>5</experiments>
</comment>
<comment type="interaction">
    <interactant intactId="EBI-701903">
        <id>Q14192</id>
    </interactant>
    <interactant intactId="EBI-2692890">
        <id>Q96KN3</id>
        <label>PKNOX2</label>
    </interactant>
    <organismsDiffer>false</organismsDiffer>
    <experiments>3</experiments>
</comment>
<comment type="interaction">
    <interactant intactId="EBI-701903">
        <id>Q14192</id>
    </interactant>
    <interactant intactId="EBI-1389308">
        <id>Q7Z3K3</id>
        <label>POGZ</label>
    </interactant>
    <organismsDiffer>false</organismsDiffer>
    <experiments>3</experiments>
</comment>
<comment type="interaction">
    <interactant intactId="EBI-701903">
        <id>Q14192</id>
    </interactant>
    <interactant intactId="EBI-12029004">
        <id>P78424</id>
        <label>POU6F2</label>
    </interactant>
    <organismsDiffer>false</organismsDiffer>
    <experiments>3</experiments>
</comment>
<comment type="interaction">
    <interactant intactId="EBI-701903">
        <id>Q14192</id>
    </interactant>
    <interactant intactId="EBI-12941246">
        <id>Q9NQV5</id>
        <label>PRDM11</label>
    </interactant>
    <organismsDiffer>false</organismsDiffer>
    <experiments>3</experiments>
</comment>
<comment type="interaction">
    <interactant intactId="EBI-701903">
        <id>Q14192</id>
    </interactant>
    <interactant intactId="EBI-11320284">
        <id>Q9NQX0</id>
        <label>PRDM6</label>
    </interactant>
    <organismsDiffer>false</organismsDiffer>
    <experiments>3</experiments>
</comment>
<comment type="interaction">
    <interactant intactId="EBI-701903">
        <id>Q14192</id>
    </interactant>
    <interactant intactId="EBI-1567866">
        <id>Q6MZQ0</id>
        <label>PRR5L</label>
    </interactant>
    <organismsDiffer>false</organismsDiffer>
    <experiments>3</experiments>
</comment>
<comment type="interaction">
    <interactant intactId="EBI-701903">
        <id>Q14192</id>
    </interactant>
    <interactant intactId="EBI-2798044">
        <id>Q2TAL8</id>
        <label>QRICH1</label>
    </interactant>
    <organismsDiffer>false</organismsDiffer>
    <experiments>5</experiments>
</comment>
<comment type="interaction">
    <interactant intactId="EBI-701903">
        <id>Q14192</id>
    </interactant>
    <interactant intactId="EBI-746228">
        <id>Q9Y5P3</id>
        <label>RAI2</label>
    </interactant>
    <organismsDiffer>false</organismsDiffer>
    <experiments>7</experiments>
</comment>
<comment type="interaction">
    <interactant intactId="EBI-701903">
        <id>Q14192</id>
    </interactant>
    <interactant intactId="EBI-12917066">
        <id>Q9NYN1</id>
        <label>RASL12</label>
    </interactant>
    <organismsDiffer>false</organismsDiffer>
    <experiments>6</experiments>
</comment>
<comment type="interaction">
    <interactant intactId="EBI-701903">
        <id>Q14192</id>
    </interactant>
    <interactant intactId="EBI-307352">
        <id>Q04864</id>
        <label>REL</label>
    </interactant>
    <organismsDiffer>false</organismsDiffer>
    <experiments>3</experiments>
</comment>
<comment type="interaction">
    <interactant intactId="EBI-701903">
        <id>Q14192</id>
    </interactant>
    <interactant intactId="EBI-742557">
        <id>P48380</id>
        <label>RFX3</label>
    </interactant>
    <organismsDiffer>false</organismsDiffer>
    <experiments>12</experiments>
</comment>
<comment type="interaction">
    <interactant intactId="EBI-701903">
        <id>Q14192</id>
    </interactant>
    <interactant intactId="EBI-10226430">
        <id>Q0D2K3</id>
        <label>RIPPLY1</label>
    </interactant>
    <organismsDiffer>false</organismsDiffer>
    <experiments>3</experiments>
</comment>
<comment type="interaction">
    <interactant intactId="EBI-701903">
        <id>Q14192</id>
    </interactant>
    <interactant intactId="EBI-3957636">
        <id>Q8IYX7</id>
        <label>SAXO1</label>
    </interactant>
    <organismsDiffer>false</organismsDiffer>
    <experiments>4</experiments>
</comment>
<comment type="interaction">
    <interactant intactId="EBI-701903">
        <id>Q14192</id>
    </interactant>
    <interactant intactId="EBI-18394432">
        <id>Q658L1</id>
        <label>SAXO2</label>
    </interactant>
    <organismsDiffer>false</organismsDiffer>
    <experiments>3</experiments>
</comment>
<comment type="interaction">
    <interactant intactId="EBI-701903">
        <id>Q14192</id>
    </interactant>
    <interactant intactId="EBI-12000762">
        <id>Q7Z5V6-2</id>
        <label>SAXO4</label>
    </interactant>
    <organismsDiffer>false</organismsDiffer>
    <experiments>3</experiments>
</comment>
<comment type="interaction">
    <interactant intactId="EBI-701903">
        <id>Q14192</id>
    </interactant>
    <interactant intactId="EBI-748391">
        <id>Q9BWG6</id>
        <label>SCNM1</label>
    </interactant>
    <organismsDiffer>false</organismsDiffer>
    <experiments>3</experiments>
</comment>
<comment type="interaction">
    <interactant intactId="EBI-701903">
        <id>Q14192</id>
    </interactant>
    <interactant intactId="EBI-2814604">
        <id>O43699</id>
        <label>SIGLEC6</label>
    </interactant>
    <organismsDiffer>false</organismsDiffer>
    <experiments>3</experiments>
</comment>
<comment type="interaction">
    <interactant intactId="EBI-701903">
        <id>Q14192</id>
    </interactant>
    <interactant intactId="EBI-1802965">
        <id>Q96EB6</id>
        <label>SIRT1</label>
    </interactant>
    <organismsDiffer>false</organismsDiffer>
    <experiments>2</experiments>
</comment>
<comment type="interaction">
    <interactant intactId="EBI-701903">
        <id>Q14192</id>
    </interactant>
    <interactant intactId="EBI-10269374">
        <id>Q8ND83</id>
        <label>SLAIN1</label>
    </interactant>
    <organismsDiffer>false</organismsDiffer>
    <experiments>3</experiments>
</comment>
<comment type="interaction">
    <interactant intactId="EBI-701903">
        <id>Q14192</id>
    </interactant>
    <interactant intactId="EBI-1045459">
        <id>O95863</id>
        <label>SNAI1</label>
    </interactant>
    <organismsDiffer>false</organismsDiffer>
    <experiments>3</experiments>
</comment>
<comment type="interaction">
    <interactant intactId="EBI-701903">
        <id>Q14192</id>
    </interactant>
    <interactant intactId="EBI-742973">
        <id>O94993</id>
        <label>SOX30</label>
    </interactant>
    <organismsDiffer>false</organismsDiffer>
    <experiments>3</experiments>
</comment>
<comment type="interaction">
    <interactant intactId="EBI-701903">
        <id>Q14192</id>
    </interactant>
    <interactant intactId="EBI-298336">
        <id>P08047</id>
        <label>SP1</label>
    </interactant>
    <organismsDiffer>false</organismsDiffer>
    <experiments>3</experiments>
</comment>
<comment type="interaction">
    <interactant intactId="EBI-701903">
        <id>Q14192</id>
    </interactant>
    <interactant intactId="EBI-8651703">
        <id>Q02086</id>
        <label>SP2</label>
    </interactant>
    <organismsDiffer>false</organismsDiffer>
    <experiments>4</experiments>
</comment>
<comment type="interaction">
    <interactant intactId="EBI-701903">
        <id>Q14192</id>
    </interactant>
    <interactant intactId="EBI-9088579">
        <id>Q02086-2</id>
        <label>SP2</label>
    </interactant>
    <organismsDiffer>false</organismsDiffer>
    <experiments>3</experiments>
</comment>
<comment type="interaction">
    <interactant intactId="EBI-701903">
        <id>Q14192</id>
    </interactant>
    <interactant intactId="EBI-985303">
        <id>Q9NYA1</id>
        <label>SPHK1</label>
    </interactant>
    <organismsDiffer>false</organismsDiffer>
    <experiments>7</experiments>
</comment>
<comment type="interaction">
    <interactant intactId="EBI-701903">
        <id>Q14192</id>
    </interactant>
    <interactant intactId="EBI-354861">
        <id>Q9C004</id>
        <label>SPRY4</label>
    </interactant>
    <organismsDiffer>false</organismsDiffer>
    <experiments>3</experiments>
</comment>
<comment type="interaction">
    <interactant intactId="EBI-701903">
        <id>Q14192</id>
    </interactant>
    <interactant intactId="EBI-465059">
        <id>Q12772</id>
        <label>SREBF2</label>
    </interactant>
    <organismsDiffer>false</organismsDiffer>
    <experiments>5</experiments>
</comment>
<comment type="interaction">
    <interactant intactId="EBI-701903">
        <id>Q14192</id>
    </interactant>
    <interactant intactId="EBI-3923210">
        <id>Q8TDR4</id>
        <label>TCP10L</label>
    </interactant>
    <organismsDiffer>false</organismsDiffer>
    <experiments>3</experiments>
</comment>
<comment type="interaction">
    <interactant intactId="EBI-701903">
        <id>Q14192</id>
    </interactant>
    <interactant intactId="EBI-2104458">
        <id>Q9C0C2</id>
        <label>TNKS1BP1</label>
    </interactant>
    <organismsDiffer>false</organismsDiffer>
    <experiments>8</experiments>
</comment>
<comment type="interaction">
    <interactant intactId="EBI-701903">
        <id>Q14192</id>
    </interactant>
    <interactant intactId="EBI-10259086">
        <id>Q86UV6-2</id>
        <label>TRIM74</label>
    </interactant>
    <organismsDiffer>false</organismsDiffer>
    <experiments>3</experiments>
</comment>
<comment type="interaction">
    <interactant intactId="EBI-701903">
        <id>Q14192</id>
    </interactant>
    <interactant intactId="EBI-18122152">
        <id>Q6F5E7</id>
        <label>TXNRD3NB</label>
    </interactant>
    <organismsDiffer>false</organismsDiffer>
    <experiments>3</experiments>
</comment>
<comment type="interaction">
    <interactant intactId="EBI-701903">
        <id>Q14192</id>
    </interactant>
    <interactant intactId="EBI-12071548">
        <id>Q8TAG6</id>
        <label>VXN</label>
    </interactant>
    <organismsDiffer>false</organismsDiffer>
    <experiments>3</experiments>
</comment>
<comment type="interaction">
    <interactant intactId="EBI-701903">
        <id>Q14192</id>
    </interactant>
    <interactant intactId="EBI-765538">
        <id>P25490</id>
        <label>YY1</label>
    </interactant>
    <organismsDiffer>false</organismsDiffer>
    <experiments>5</experiments>
</comment>
<comment type="interaction">
    <interactant intactId="EBI-701903">
        <id>Q14192</id>
    </interactant>
    <interactant intactId="EBI-711679">
        <id>Q9NTW7</id>
        <label>ZFP64</label>
    </interactant>
    <organismsDiffer>false</organismsDiffer>
    <experiments>8</experiments>
</comment>
<comment type="interaction">
    <interactant intactId="EBI-701903">
        <id>Q14192</id>
    </interactant>
    <interactant intactId="EBI-2514659">
        <id>Q5VZL5</id>
        <label>ZMYM4</label>
    </interactant>
    <organismsDiffer>false</organismsDiffer>
    <experiments>3</experiments>
</comment>
<comment type="interaction">
    <interactant intactId="EBI-701903">
        <id>Q14192</id>
    </interactant>
    <interactant intactId="EBI-2849346">
        <id>P52739</id>
        <label>ZNF131</label>
    </interactant>
    <organismsDiffer>false</organismsDiffer>
    <experiments>3</experiments>
</comment>
<comment type="interaction">
    <interactant intactId="EBI-701903">
        <id>Q14192</id>
    </interactant>
    <interactant intactId="EBI-10213055">
        <id>P52739-2</id>
        <label>ZNF131</label>
    </interactant>
    <organismsDiffer>false</organismsDiffer>
    <experiments>6</experiments>
</comment>
<comment type="interaction">
    <interactant intactId="EBI-701903">
        <id>Q14192</id>
    </interactant>
    <interactant intactId="EBI-2849334">
        <id>P52747</id>
        <label>ZNF143</label>
    </interactant>
    <organismsDiffer>false</organismsDiffer>
    <experiments>4</experiments>
</comment>
<comment type="interaction">
    <interactant intactId="EBI-701903">
        <id>Q14192</id>
    </interactant>
    <interactant intactId="EBI-3913354">
        <id>P98182</id>
        <label>ZNF200</label>
    </interactant>
    <organismsDiffer>false</organismsDiffer>
    <experiments>3</experiments>
</comment>
<comment type="interaction">
    <interactant intactId="EBI-701903">
        <id>Q14192</id>
    </interactant>
    <interactant intactId="EBI-5657766">
        <id>P17027</id>
        <label>ZNF23</label>
    </interactant>
    <organismsDiffer>false</organismsDiffer>
    <experiments>3</experiments>
</comment>
<comment type="interaction">
    <interactant intactId="EBI-701903">
        <id>Q14192</id>
    </interactant>
    <interactant intactId="EBI-347633">
        <id>Q9H9D4</id>
        <label>ZNF408</label>
    </interactant>
    <organismsDiffer>false</organismsDiffer>
    <experiments>3</experiments>
</comment>
<comment type="interaction">
    <interactant intactId="EBI-701903">
        <id>Q14192</id>
    </interactant>
    <interactant intactId="EBI-11741890">
        <id>Q86VK4-3</id>
        <label>ZNF410</label>
    </interactant>
    <organismsDiffer>false</organismsDiffer>
    <experiments>3</experiments>
</comment>
<comment type="interaction">
    <interactant intactId="EBI-701903">
        <id>Q14192</id>
    </interactant>
    <interactant intactId="EBI-740727">
        <id>Q8TAU3</id>
        <label>ZNF417</label>
    </interactant>
    <organismsDiffer>false</organismsDiffer>
    <experiments>3</experiments>
</comment>
<comment type="interaction">
    <interactant intactId="EBI-701903">
        <id>Q14192</id>
    </interactant>
    <interactant intactId="EBI-4395669">
        <id>Q6ZNG0</id>
        <label>ZNF620</label>
    </interactant>
    <organismsDiffer>false</organismsDiffer>
    <experiments>3</experiments>
</comment>
<comment type="interaction">
    <interactant intactId="EBI-701903">
        <id>Q14192</id>
    </interactant>
    <interactant intactId="EBI-625509">
        <id>Q8N720</id>
        <label>ZNF655</label>
    </interactant>
    <organismsDiffer>false</organismsDiffer>
    <experiments>3</experiments>
</comment>
<comment type="interaction">
    <interactant intactId="EBI-701903">
        <id>Q14192</id>
    </interactant>
    <interactant intactId="EBI-7254550">
        <id>P36508</id>
        <label>ZNF76</label>
    </interactant>
    <organismsDiffer>false</organismsDiffer>
    <experiments>4</experiments>
</comment>
<comment type="interaction">
    <interactant intactId="EBI-701903">
        <id>Q14192</id>
    </interactant>
    <interactant intactId="EBI-18141506">
        <id>Q49A12</id>
        <label>ZNF85</label>
    </interactant>
    <organismsDiffer>false</organismsDiffer>
    <experiments>3</experiments>
</comment>
<comment type="interaction">
    <interactant intactId="EBI-701903">
        <id>Q14192</id>
    </interactant>
    <interactant intactId="EBI-751531">
        <id>O15535</id>
        <label>ZSCAN9</label>
    </interactant>
    <organismsDiffer>false</organismsDiffer>
    <experiments>3</experiments>
</comment>
<comment type="interaction">
    <interactant intactId="EBI-701903">
        <id>Q14192</id>
    </interactant>
    <interactant intactId="EBI-15626796">
        <id>Q9ERP3</id>
        <label>Trim54</label>
    </interactant>
    <organismsDiffer>true</organismsDiffer>
    <experiments>2</experiments>
</comment>
<comment type="subcellular location">
    <subcellularLocation>
        <location evidence="5 8">Cytoplasm</location>
    </subcellularLocation>
    <subcellularLocation>
        <location evidence="5 8">Nucleus</location>
    </subcellularLocation>
    <subcellularLocation>
        <location evidence="1">Cytoplasm</location>
        <location evidence="1">Myofibril</location>
        <location evidence="1">Sarcomere</location>
        <location evidence="1">Z line</location>
    </subcellularLocation>
</comment>
<comment type="alternative products">
    <event type="alternative splicing"/>
    <isoform>
        <id>Q14192-1</id>
        <name>1</name>
        <sequence type="displayed"/>
    </isoform>
    <isoform>
        <id>Q14192-2</id>
        <name>2</name>
        <sequence type="described" ref="VSP_056999 VSP_057000"/>
    </isoform>
</comment>
<comment type="tissue specificity">
    <text evidence="5">Expressed in skeletal muscle and heart.</text>
</comment>
<comment type="domain">
    <text evidence="8">The third LIM zinc-binding mediates interaction with E4F1.</text>
</comment>
<comment type="online information" name="Atlas of Genetics and Cytogenetics in Oncology and Haematology">
    <link uri="https://atlasgeneticsoncology.org/gene/44092/FHL2"/>
</comment>
<accession>Q14192</accession>
<accession>Q13229</accession>
<accession>Q13644</accession>
<accession>Q2I5I4</accession>
<accession>Q5TM15</accession>
<accession>Q9P294</accession>
<proteinExistence type="evidence at protein level"/>
<reference key="1">
    <citation type="journal article" date="1997" name="DNA Cell Biol.">
        <title>Subtractive cloning and characterization of DRAL, a novel LIM-domain protein down-regulated in rhabdomyosarcoma.</title>
        <authorList>
            <person name="Genini M."/>
            <person name="Schwalbe P."/>
            <person name="Scholl F.A."/>
            <person name="Remppis A."/>
            <person name="Mattei M.-G."/>
            <person name="Schaefer B.W."/>
        </authorList>
    </citation>
    <scope>NUCLEOTIDE SEQUENCE [MRNA] (ISOFORM 1)</scope>
    <source>
        <tissue>Skeletal muscle</tissue>
    </source>
</reference>
<reference key="2">
    <citation type="journal article" date="1998" name="Gene">
        <title>Molecular cloning and characterization of FHL2, a novel LIM domain protein preferentially expressed in human heart.</title>
        <authorList>
            <person name="Chan K.K."/>
            <person name="Tsui S.K.W."/>
            <person name="Lee S.M.Y."/>
            <person name="Luk S.C.W."/>
            <person name="Liew C.C."/>
            <person name="Fung K.P."/>
            <person name="Waye M.M.Y."/>
            <person name="Lee C.Y."/>
        </authorList>
    </citation>
    <scope>NUCLEOTIDE SEQUENCE [MRNA] (ISOFORM 1)</scope>
    <scope>VARIANT MET-167</scope>
    <source>
        <tissue>Heart</tissue>
    </source>
</reference>
<reference key="3">
    <citation type="journal article" date="2000" name="Hum. Mol. Genet.">
        <title>Alzheimer's disease-associated presenilin 2 interacts with DRAL, an LIM-domain protein.</title>
        <authorList>
            <person name="Tanahashi H."/>
            <person name="Tabira T."/>
        </authorList>
    </citation>
    <scope>NUCLEOTIDE SEQUENCE [GENOMIC DNA]</scope>
    <source>
        <tissue>Leukocyte</tissue>
    </source>
</reference>
<reference key="4">
    <citation type="journal article" date="2005" name="Biochem. J.">
        <title>FHL3 negatively regulates human high-affinity IgE receptor beta-chain gene expression by acting as a transcriptional co-repressor of MZF-1.</title>
        <authorList>
            <person name="Takahashi K."/>
            <person name="Matsumoto C."/>
            <person name="Ra C."/>
        </authorList>
    </citation>
    <scope>NUCLEOTIDE SEQUENCE [MRNA] (ISOFORM 2)</scope>
</reference>
<reference key="5">
    <citation type="submission" date="2005-11" db="EMBL/GenBank/DDBJ databases">
        <title>The FHL2 LIM-domain protein is implicated in hematopoiesis and leukemogenesis.</title>
        <authorList>
            <person name="Qian Z."/>
            <person name="Mao L."/>
            <person name="Fernald A."/>
            <person name="Yu H."/>
            <person name="Luo R."/>
            <person name="Anastasi J."/>
            <person name="Le Beau M.M."/>
        </authorList>
    </citation>
    <scope>NUCLEOTIDE SEQUENCE [MRNA] (ISOFORM 1)</scope>
    <scope>VARIANT MET-167</scope>
    <source>
        <tissue>Bone marrow</tissue>
    </source>
</reference>
<reference key="6">
    <citation type="journal article" date="2005" name="Nature">
        <title>Generation and annotation of the DNA sequences of human chromosomes 2 and 4.</title>
        <authorList>
            <person name="Hillier L.W."/>
            <person name="Graves T.A."/>
            <person name="Fulton R.S."/>
            <person name="Fulton L.A."/>
            <person name="Pepin K.H."/>
            <person name="Minx P."/>
            <person name="Wagner-McPherson C."/>
            <person name="Layman D."/>
            <person name="Wylie K."/>
            <person name="Sekhon M."/>
            <person name="Becker M.C."/>
            <person name="Fewell G.A."/>
            <person name="Delehaunty K.D."/>
            <person name="Miner T.L."/>
            <person name="Nash W.E."/>
            <person name="Kremitzki C."/>
            <person name="Oddy L."/>
            <person name="Du H."/>
            <person name="Sun H."/>
            <person name="Bradshaw-Cordum H."/>
            <person name="Ali J."/>
            <person name="Carter J."/>
            <person name="Cordes M."/>
            <person name="Harris A."/>
            <person name="Isak A."/>
            <person name="van Brunt A."/>
            <person name="Nguyen C."/>
            <person name="Du F."/>
            <person name="Courtney L."/>
            <person name="Kalicki J."/>
            <person name="Ozersky P."/>
            <person name="Abbott S."/>
            <person name="Armstrong J."/>
            <person name="Belter E.A."/>
            <person name="Caruso L."/>
            <person name="Cedroni M."/>
            <person name="Cotton M."/>
            <person name="Davidson T."/>
            <person name="Desai A."/>
            <person name="Elliott G."/>
            <person name="Erb T."/>
            <person name="Fronick C."/>
            <person name="Gaige T."/>
            <person name="Haakenson W."/>
            <person name="Haglund K."/>
            <person name="Holmes A."/>
            <person name="Harkins R."/>
            <person name="Kim K."/>
            <person name="Kruchowski S.S."/>
            <person name="Strong C.M."/>
            <person name="Grewal N."/>
            <person name="Goyea E."/>
            <person name="Hou S."/>
            <person name="Levy A."/>
            <person name="Martinka S."/>
            <person name="Mead K."/>
            <person name="McLellan M.D."/>
            <person name="Meyer R."/>
            <person name="Randall-Maher J."/>
            <person name="Tomlinson C."/>
            <person name="Dauphin-Kohlberg S."/>
            <person name="Kozlowicz-Reilly A."/>
            <person name="Shah N."/>
            <person name="Swearengen-Shahid S."/>
            <person name="Snider J."/>
            <person name="Strong J.T."/>
            <person name="Thompson J."/>
            <person name="Yoakum M."/>
            <person name="Leonard S."/>
            <person name="Pearman C."/>
            <person name="Trani L."/>
            <person name="Radionenko M."/>
            <person name="Waligorski J.E."/>
            <person name="Wang C."/>
            <person name="Rock S.M."/>
            <person name="Tin-Wollam A.-M."/>
            <person name="Maupin R."/>
            <person name="Latreille P."/>
            <person name="Wendl M.C."/>
            <person name="Yang S.-P."/>
            <person name="Pohl C."/>
            <person name="Wallis J.W."/>
            <person name="Spieth J."/>
            <person name="Bieri T.A."/>
            <person name="Berkowicz N."/>
            <person name="Nelson J.O."/>
            <person name="Osborne J."/>
            <person name="Ding L."/>
            <person name="Meyer R."/>
            <person name="Sabo A."/>
            <person name="Shotland Y."/>
            <person name="Sinha P."/>
            <person name="Wohldmann P.E."/>
            <person name="Cook L.L."/>
            <person name="Hickenbotham M.T."/>
            <person name="Eldred J."/>
            <person name="Williams D."/>
            <person name="Jones T.A."/>
            <person name="She X."/>
            <person name="Ciccarelli F.D."/>
            <person name="Izaurralde E."/>
            <person name="Taylor J."/>
            <person name="Schmutz J."/>
            <person name="Myers R.M."/>
            <person name="Cox D.R."/>
            <person name="Huang X."/>
            <person name="McPherson J.D."/>
            <person name="Mardis E.R."/>
            <person name="Clifton S.W."/>
            <person name="Warren W.C."/>
            <person name="Chinwalla A.T."/>
            <person name="Eddy S.R."/>
            <person name="Marra M.A."/>
            <person name="Ovcharenko I."/>
            <person name="Furey T.S."/>
            <person name="Miller W."/>
            <person name="Eichler E.E."/>
            <person name="Bork P."/>
            <person name="Suyama M."/>
            <person name="Torrents D."/>
            <person name="Waterston R.H."/>
            <person name="Wilson R.K."/>
        </authorList>
    </citation>
    <scope>NUCLEOTIDE SEQUENCE [LARGE SCALE GENOMIC DNA]</scope>
</reference>
<reference key="7">
    <citation type="journal article" date="2004" name="Genome Res.">
        <title>The status, quality, and expansion of the NIH full-length cDNA project: the Mammalian Gene Collection (MGC).</title>
        <authorList>
            <consortium name="The MGC Project Team"/>
        </authorList>
    </citation>
    <scope>NUCLEOTIDE SEQUENCE [LARGE SCALE MRNA] (ISOFORM 1)</scope>
    <source>
        <tissue>Placenta</tissue>
    </source>
</reference>
<reference key="8">
    <citation type="journal article" date="1996" name="Biochem. Biophys. Res. Commun.">
        <title>Slim defines a novel family of LIM-proteins expressed in skeletal muscle.</title>
        <authorList>
            <person name="Morgan M.J."/>
            <person name="Madgwick A.J.A."/>
        </authorList>
    </citation>
    <scope>NUCLEOTIDE SEQUENCE [MRNA] OF 127-279 (ISOFORM 1)</scope>
    <scope>VARIANT MET-167</scope>
    <source>
        <tissue>Heart muscle</tissue>
    </source>
</reference>
<reference key="9">
    <citation type="journal article" date="2002" name="J. Cell. Biochem.">
        <title>Interaction of the heart-specific LIM domain protein, FHL2, with DNA-binding nuclear protein, hNP220.</title>
        <authorList>
            <person name="Ng E.K.O."/>
            <person name="Chan K.K."/>
            <person name="Wong C.H."/>
            <person name="Tsui S.K.W."/>
            <person name="Ngai S.M."/>
            <person name="Lee S.M.Y."/>
            <person name="Kotaka M."/>
            <person name="Lee C.Y."/>
            <person name="Waye M.M.Y."/>
            <person name="Fung K.P."/>
        </authorList>
    </citation>
    <scope>SUBCELLULAR LOCATION</scope>
    <scope>TISSUE SPECIFICITY</scope>
    <scope>INTERACTION WITH ZNF638</scope>
</reference>
<reference key="10">
    <citation type="journal article" date="2002" name="J. Cell Sci.">
        <title>Subcellular targeting of metabolic enzymes to titin in heart muscle may be mediated by DRAL/FHL-2.</title>
        <authorList>
            <person name="Lange S."/>
            <person name="Auerbach D."/>
            <person name="McLoughlin P."/>
            <person name="Perriard E."/>
            <person name="Schafer B.W."/>
            <person name="Perriard J.-C."/>
            <person name="Ehler E."/>
        </authorList>
    </citation>
    <scope>INTERACTION WITH TTN</scope>
</reference>
<reference key="11">
    <citation type="journal article" date="2005" name="EMBO J.">
        <title>Suppression of FOXO1 activity by FHL2 through SIRT1-mediated deacetylation.</title>
        <authorList>
            <person name="Yang Y."/>
            <person name="Hou H."/>
            <person name="Haller E.M."/>
            <person name="Nicosia S.V."/>
            <person name="Bai W."/>
        </authorList>
    </citation>
    <scope>FUNCTION</scope>
    <scope>INTERACTION WITH SIRT1 AND FOXO1</scope>
</reference>
<reference key="12">
    <citation type="journal article" date="2006" name="Oncogene">
        <title>The LIM-only protein FHL2 is a negative regulator of E4F1.</title>
        <authorList>
            <person name="Paul C."/>
            <person name="Lacroix M."/>
            <person name="Iankova I."/>
            <person name="Julien E."/>
            <person name="Schaefer B.W."/>
            <person name="Labalette C."/>
            <person name="Wei Y."/>
            <person name="Le Cam A."/>
            <person name="Le Cam L."/>
            <person name="Sardet C."/>
        </authorList>
    </citation>
    <scope>FUNCTION</scope>
    <scope>INTERACTION WITH E4F1</scope>
    <scope>SUBCELLULAR LOCATION</scope>
</reference>
<reference key="13">
    <citation type="journal article" date="2008" name="Proc. Natl. Acad. Sci. U.S.A.">
        <title>A quantitative atlas of mitotic phosphorylation.</title>
        <authorList>
            <person name="Dephoure N."/>
            <person name="Zhou C."/>
            <person name="Villen J."/>
            <person name="Beausoleil S.A."/>
            <person name="Bakalarski C.E."/>
            <person name="Elledge S.J."/>
            <person name="Gygi S.P."/>
        </authorList>
    </citation>
    <scope>PHOSPHORYLATION [LARGE SCALE ANALYSIS] AT SER-238</scope>
    <scope>IDENTIFICATION BY MASS SPECTROMETRY [LARGE SCALE ANALYSIS]</scope>
    <source>
        <tissue>Cervix carcinoma</tissue>
    </source>
</reference>
<reference key="14">
    <citation type="journal article" date="2009" name="J. Mol. Recognit.">
        <title>The cell migration protein Grb7 associates with transcriptional regulator FHL2 in a Grb7 phosphorylation-dependent manner.</title>
        <authorList>
            <person name="Siamakpour-Reihani S."/>
            <person name="Argiros H.J."/>
            <person name="Wilmeth L.J."/>
            <person name="Haas L.L."/>
            <person name="Peterson T.A."/>
            <person name="Johnson D.L."/>
            <person name="Shuster C.B."/>
            <person name="Lyons B.A."/>
        </authorList>
    </citation>
    <scope>FUNCTION</scope>
    <scope>INTERACTION WITH GRB7</scope>
</reference>
<reference key="15">
    <citation type="journal article" date="2011" name="BMC Syst. Biol.">
        <title>Initial characterization of the human central proteome.</title>
        <authorList>
            <person name="Burkard T.R."/>
            <person name="Planyavsky M."/>
            <person name="Kaupe I."/>
            <person name="Breitwieser F.P."/>
            <person name="Buerckstuemmer T."/>
            <person name="Bennett K.L."/>
            <person name="Superti-Furga G."/>
            <person name="Colinge J."/>
        </authorList>
    </citation>
    <scope>IDENTIFICATION BY MASS SPECTROMETRY [LARGE SCALE ANALYSIS]</scope>
</reference>
<reference key="16">
    <citation type="journal article" date="2012" name="Mol. Cell. Biol.">
        <title>FHL2 binds calcineurin and represses pathological cardiac growth.</title>
        <authorList>
            <person name="Hojayev B."/>
            <person name="Rothermel B.A."/>
            <person name="Gillette T.G."/>
            <person name="Hill J.A."/>
        </authorList>
    </citation>
    <scope>FUNCTION</scope>
</reference>
<reference key="17">
    <citation type="journal article" date="2014" name="Nat. Struct. Mol. Biol.">
        <title>Uncovering global SUMOylation signaling networks in a site-specific manner.</title>
        <authorList>
            <person name="Hendriks I.A."/>
            <person name="D'Souza R.C."/>
            <person name="Yang B."/>
            <person name="Verlaan-de Vries M."/>
            <person name="Mann M."/>
            <person name="Vertegaal A.C."/>
        </authorList>
    </citation>
    <scope>SUMOYLATION [LARGE SCALE ANALYSIS] AT LYS-78; LYS-167 AND LYS-220</scope>
    <scope>IDENTIFICATION BY MASS SPECTROMETRY [LARGE SCALE ANALYSIS]</scope>
</reference>
<reference key="18">
    <citation type="journal article" date="2017" name="J. Biol. Chem.">
        <title>The novel cardiac z-disc protein CEFIP regulates cardiomyocyte hypertrophy by modulating calcineurin signaling.</title>
        <authorList>
            <person name="Dierck F."/>
            <person name="Kuhn C."/>
            <person name="Rohr C."/>
            <person name="Hille S."/>
            <person name="Braune J."/>
            <person name="Sossalla S."/>
            <person name="Molt S."/>
            <person name="van der Ven P.F.M."/>
            <person name="Fuerst D.O."/>
            <person name="Frey N."/>
        </authorList>
    </citation>
    <scope>INTERACTION WITH CEFIP</scope>
</reference>
<reference key="19">
    <citation type="submission" date="2006-06" db="PDB data bank">
        <title>Solution structure of LIM domains in LIM-protein 3.</title>
        <authorList>
            <consortium name="RIKEN structural genomics initiative (RSGI)"/>
        </authorList>
    </citation>
    <scope>STRUCTURE BY NMR OF 98-279</scope>
</reference>
<name>FHL2_HUMAN</name>